<comment type="function">
    <text evidence="1">This protein binds to the 23S rRNA, and is important in its secondary structure. It is located near the subunit interface in the base of the L7/L12 stalk, and near the tRNA binding site of the peptidyltransferase center.</text>
</comment>
<comment type="subunit">
    <text evidence="1">Part of the 50S ribosomal subunit.</text>
</comment>
<comment type="similarity">
    <text evidence="1">Belongs to the universal ribosomal protein uL6 family.</text>
</comment>
<accession>C0QQN8</accession>
<proteinExistence type="inferred from homology"/>
<name>RL6_PERMH</name>
<feature type="chain" id="PRO_1000166823" description="Large ribosomal subunit protein uL6">
    <location>
        <begin position="1"/>
        <end position="179"/>
    </location>
</feature>
<sequence length="179" mass="19639">MSRIGKKPIDIPKGVEVKVGEGNFVTVKGPKGELSYKFNPELKINVEENQVKVERPNDSSFMRAIHGTTRALIANMIKGVTEGFTVELEIVGIGYRANMKGKAIELQLGYSHPIHFEPPEGVQIAVEGNIIKVSGIDKQKVGQVAAKIRDFRKPDPYKGKGIRYKGEVIKLKAGKSVGK</sequence>
<dbReference type="EMBL" id="CP001230">
    <property type="protein sequence ID" value="ACO03423.1"/>
    <property type="molecule type" value="Genomic_DNA"/>
</dbReference>
<dbReference type="RefSeq" id="WP_012675662.1">
    <property type="nucleotide sequence ID" value="NC_012440.1"/>
</dbReference>
<dbReference type="SMR" id="C0QQN8"/>
<dbReference type="STRING" id="123214.PERMA_1211"/>
<dbReference type="PaxDb" id="123214-PERMA_1211"/>
<dbReference type="KEGG" id="pmx:PERMA_1211"/>
<dbReference type="eggNOG" id="COG0097">
    <property type="taxonomic scope" value="Bacteria"/>
</dbReference>
<dbReference type="HOGENOM" id="CLU_065464_1_2_0"/>
<dbReference type="OrthoDB" id="9805007at2"/>
<dbReference type="Proteomes" id="UP000001366">
    <property type="component" value="Chromosome"/>
</dbReference>
<dbReference type="GO" id="GO:0022625">
    <property type="term" value="C:cytosolic large ribosomal subunit"/>
    <property type="evidence" value="ECO:0007669"/>
    <property type="project" value="TreeGrafter"/>
</dbReference>
<dbReference type="GO" id="GO:0019843">
    <property type="term" value="F:rRNA binding"/>
    <property type="evidence" value="ECO:0007669"/>
    <property type="project" value="UniProtKB-UniRule"/>
</dbReference>
<dbReference type="GO" id="GO:0003735">
    <property type="term" value="F:structural constituent of ribosome"/>
    <property type="evidence" value="ECO:0007669"/>
    <property type="project" value="InterPro"/>
</dbReference>
<dbReference type="GO" id="GO:0002181">
    <property type="term" value="P:cytoplasmic translation"/>
    <property type="evidence" value="ECO:0007669"/>
    <property type="project" value="TreeGrafter"/>
</dbReference>
<dbReference type="FunFam" id="3.90.930.12:FF:000001">
    <property type="entry name" value="50S ribosomal protein L6"/>
    <property type="match status" value="1"/>
</dbReference>
<dbReference type="FunFam" id="3.90.930.12:FF:000002">
    <property type="entry name" value="50S ribosomal protein L6"/>
    <property type="match status" value="1"/>
</dbReference>
<dbReference type="Gene3D" id="3.90.930.12">
    <property type="entry name" value="Ribosomal protein L6, alpha-beta domain"/>
    <property type="match status" value="2"/>
</dbReference>
<dbReference type="HAMAP" id="MF_01365_B">
    <property type="entry name" value="Ribosomal_uL6_B"/>
    <property type="match status" value="1"/>
</dbReference>
<dbReference type="InterPro" id="IPR000702">
    <property type="entry name" value="Ribosomal_uL6-like"/>
</dbReference>
<dbReference type="InterPro" id="IPR036789">
    <property type="entry name" value="Ribosomal_uL6-like_a/b-dom_sf"/>
</dbReference>
<dbReference type="InterPro" id="IPR020040">
    <property type="entry name" value="Ribosomal_uL6_a/b-dom"/>
</dbReference>
<dbReference type="InterPro" id="IPR019906">
    <property type="entry name" value="Ribosomal_uL6_bac-type"/>
</dbReference>
<dbReference type="InterPro" id="IPR002358">
    <property type="entry name" value="Ribosomal_uL6_CS"/>
</dbReference>
<dbReference type="NCBIfam" id="TIGR03654">
    <property type="entry name" value="L6_bact"/>
    <property type="match status" value="1"/>
</dbReference>
<dbReference type="PANTHER" id="PTHR11655">
    <property type="entry name" value="60S/50S RIBOSOMAL PROTEIN L6/L9"/>
    <property type="match status" value="1"/>
</dbReference>
<dbReference type="PANTHER" id="PTHR11655:SF14">
    <property type="entry name" value="LARGE RIBOSOMAL SUBUNIT PROTEIN UL6M"/>
    <property type="match status" value="1"/>
</dbReference>
<dbReference type="Pfam" id="PF00347">
    <property type="entry name" value="Ribosomal_L6"/>
    <property type="match status" value="2"/>
</dbReference>
<dbReference type="PIRSF" id="PIRSF002162">
    <property type="entry name" value="Ribosomal_L6"/>
    <property type="match status" value="1"/>
</dbReference>
<dbReference type="PRINTS" id="PR00059">
    <property type="entry name" value="RIBOSOMALL6"/>
</dbReference>
<dbReference type="SUPFAM" id="SSF56053">
    <property type="entry name" value="Ribosomal protein L6"/>
    <property type="match status" value="2"/>
</dbReference>
<dbReference type="PROSITE" id="PS00525">
    <property type="entry name" value="RIBOSOMAL_L6_1"/>
    <property type="match status" value="1"/>
</dbReference>
<reference key="1">
    <citation type="journal article" date="2009" name="J. Bacteriol.">
        <title>Complete and draft genome sequences of six members of the Aquificales.</title>
        <authorList>
            <person name="Reysenbach A.-L."/>
            <person name="Hamamura N."/>
            <person name="Podar M."/>
            <person name="Griffiths E."/>
            <person name="Ferreira S."/>
            <person name="Hochstein R."/>
            <person name="Heidelberg J."/>
            <person name="Johnson J."/>
            <person name="Mead D."/>
            <person name="Pohorille A."/>
            <person name="Sarmiento M."/>
            <person name="Schweighofer K."/>
            <person name="Seshadri R."/>
            <person name="Voytek M.A."/>
        </authorList>
    </citation>
    <scope>NUCLEOTIDE SEQUENCE [LARGE SCALE GENOMIC DNA]</scope>
    <source>
        <strain>DSM 14350 / EX-H1</strain>
    </source>
</reference>
<organism>
    <name type="scientific">Persephonella marina (strain DSM 14350 / EX-H1)</name>
    <dbReference type="NCBI Taxonomy" id="123214"/>
    <lineage>
        <taxon>Bacteria</taxon>
        <taxon>Pseudomonadati</taxon>
        <taxon>Aquificota</taxon>
        <taxon>Aquificia</taxon>
        <taxon>Aquificales</taxon>
        <taxon>Hydrogenothermaceae</taxon>
        <taxon>Persephonella</taxon>
    </lineage>
</organism>
<evidence type="ECO:0000255" key="1">
    <source>
        <dbReference type="HAMAP-Rule" id="MF_01365"/>
    </source>
</evidence>
<evidence type="ECO:0000305" key="2"/>
<protein>
    <recommendedName>
        <fullName evidence="1">Large ribosomal subunit protein uL6</fullName>
    </recommendedName>
    <alternativeName>
        <fullName evidence="2">50S ribosomal protein L6</fullName>
    </alternativeName>
</protein>
<keyword id="KW-1185">Reference proteome</keyword>
<keyword id="KW-0687">Ribonucleoprotein</keyword>
<keyword id="KW-0689">Ribosomal protein</keyword>
<keyword id="KW-0694">RNA-binding</keyword>
<keyword id="KW-0699">rRNA-binding</keyword>
<gene>
    <name evidence="1" type="primary">rplF</name>
    <name type="ordered locus">PERMA_1211</name>
</gene>